<accession>P0A2G4</accession>
<accession>P24115</accession>
<protein>
    <recommendedName>
        <fullName>Citrate-proton symporter</fullName>
    </recommendedName>
    <alternativeName>
        <fullName>Citrate carrier protein</fullName>
    </alternativeName>
    <alternativeName>
        <fullName>Citrate transporter</fullName>
    </alternativeName>
    <alternativeName>
        <fullName>Citrate utilization determinant</fullName>
    </alternativeName>
    <alternativeName>
        <fullName>Citrate utilization protein A</fullName>
    </alternativeName>
</protein>
<keyword id="KW-0997">Cell inner membrane</keyword>
<keyword id="KW-1003">Cell membrane</keyword>
<keyword id="KW-0163">Citrate utilization</keyword>
<keyword id="KW-0472">Membrane</keyword>
<keyword id="KW-0769">Symport</keyword>
<keyword id="KW-0812">Transmembrane</keyword>
<keyword id="KW-1133">Transmembrane helix</keyword>
<keyword id="KW-0813">Transport</keyword>
<proteinExistence type="inferred from homology"/>
<reference key="1">
    <citation type="journal article" date="2001" name="Nature">
        <title>Complete genome sequence of a multiple drug resistant Salmonella enterica serovar Typhi CT18.</title>
        <authorList>
            <person name="Parkhill J."/>
            <person name="Dougan G."/>
            <person name="James K.D."/>
            <person name="Thomson N.R."/>
            <person name="Pickard D."/>
            <person name="Wain J."/>
            <person name="Churcher C.M."/>
            <person name="Mungall K.L."/>
            <person name="Bentley S.D."/>
            <person name="Holden M.T.G."/>
            <person name="Sebaihia M."/>
            <person name="Baker S."/>
            <person name="Basham D."/>
            <person name="Brooks K."/>
            <person name="Chillingworth T."/>
            <person name="Connerton P."/>
            <person name="Cronin A."/>
            <person name="Davis P."/>
            <person name="Davies R.M."/>
            <person name="Dowd L."/>
            <person name="White N."/>
            <person name="Farrar J."/>
            <person name="Feltwell T."/>
            <person name="Hamlin N."/>
            <person name="Haque A."/>
            <person name="Hien T.T."/>
            <person name="Holroyd S."/>
            <person name="Jagels K."/>
            <person name="Krogh A."/>
            <person name="Larsen T.S."/>
            <person name="Leather S."/>
            <person name="Moule S."/>
            <person name="O'Gaora P."/>
            <person name="Parry C."/>
            <person name="Quail M.A."/>
            <person name="Rutherford K.M."/>
            <person name="Simmonds M."/>
            <person name="Skelton J."/>
            <person name="Stevens K."/>
            <person name="Whitehead S."/>
            <person name="Barrell B.G."/>
        </authorList>
    </citation>
    <scope>NUCLEOTIDE SEQUENCE [LARGE SCALE GENOMIC DNA]</scope>
    <source>
        <strain>CT18</strain>
    </source>
</reference>
<reference key="2">
    <citation type="journal article" date="2003" name="J. Bacteriol.">
        <title>Comparative genomics of Salmonella enterica serovar Typhi strains Ty2 and CT18.</title>
        <authorList>
            <person name="Deng W."/>
            <person name="Liou S.-R."/>
            <person name="Plunkett G. III"/>
            <person name="Mayhew G.F."/>
            <person name="Rose D.J."/>
            <person name="Burland V."/>
            <person name="Kodoyianni V."/>
            <person name="Schwartz D.C."/>
            <person name="Blattner F.R."/>
        </authorList>
    </citation>
    <scope>NUCLEOTIDE SEQUENCE [LARGE SCALE GENOMIC DNA]</scope>
    <source>
        <strain>ATCC 700931 / Ty2</strain>
    </source>
</reference>
<comment type="function">
    <text evidence="1">Uptake of citrate across the boundary membrane with the concomitant transport of protons into the cell (symport system).</text>
</comment>
<comment type="subcellular location">
    <subcellularLocation>
        <location evidence="3">Cell inner membrane</location>
        <topology evidence="2">Multi-pass membrane protein</topology>
    </subcellularLocation>
</comment>
<comment type="miscellaneous">
    <text evidence="1">Allows the utilization of citrate as a sole source of carbon and energy.</text>
</comment>
<comment type="similarity">
    <text evidence="3">Belongs to the major facilitator superfamily. Metabolite:H+ Symporter (MHS) family (TC 2.A.1.6) family.</text>
</comment>
<feature type="chain" id="PRO_0000050299" description="Citrate-proton symporter">
    <location>
        <begin position="1"/>
        <end position="434"/>
    </location>
</feature>
<feature type="topological domain" description="Cytoplasmic" evidence="2">
    <location>
        <begin position="1"/>
        <end position="21"/>
    </location>
</feature>
<feature type="transmembrane region" description="Helical; Name=1" evidence="2">
    <location>
        <begin position="22"/>
        <end position="42"/>
    </location>
</feature>
<feature type="topological domain" description="Periplasmic" evidence="2">
    <location>
        <begin position="43"/>
        <end position="54"/>
    </location>
</feature>
<feature type="transmembrane region" description="Helical; Name=2" evidence="2">
    <location>
        <begin position="55"/>
        <end position="75"/>
    </location>
</feature>
<feature type="topological domain" description="Cytoplasmic" evidence="2">
    <location>
        <begin position="76"/>
        <end position="87"/>
    </location>
</feature>
<feature type="transmembrane region" description="Helical; Name=3" evidence="2">
    <location>
        <begin position="88"/>
        <end position="108"/>
    </location>
</feature>
<feature type="topological domain" description="Periplasmic" evidence="2">
    <location>
        <begin position="109"/>
        <end position="111"/>
    </location>
</feature>
<feature type="transmembrane region" description="Helical; Name=4" evidence="2">
    <location>
        <begin position="112"/>
        <end position="132"/>
    </location>
</feature>
<feature type="topological domain" description="Cytoplasmic" evidence="2">
    <location>
        <begin position="133"/>
        <end position="164"/>
    </location>
</feature>
<feature type="transmembrane region" description="Helical; Name=5" evidence="2">
    <location>
        <begin position="165"/>
        <end position="185"/>
    </location>
</feature>
<feature type="topological domain" description="Periplasmic" evidence="2">
    <location>
        <position position="186"/>
    </location>
</feature>
<feature type="transmembrane region" description="Helical; Name=6" evidence="2">
    <location>
        <begin position="187"/>
        <end position="207"/>
    </location>
</feature>
<feature type="topological domain" description="Cytoplasmic" evidence="2">
    <location>
        <begin position="208"/>
        <end position="238"/>
    </location>
</feature>
<feature type="transmembrane region" description="Helical; Name=7" evidence="2">
    <location>
        <begin position="239"/>
        <end position="259"/>
    </location>
</feature>
<feature type="topological domain" description="Periplasmic" evidence="2">
    <location>
        <begin position="260"/>
        <end position="276"/>
    </location>
</feature>
<feature type="transmembrane region" description="Helical; Name=8" evidence="2">
    <location>
        <begin position="277"/>
        <end position="297"/>
    </location>
</feature>
<feature type="topological domain" description="Cytoplasmic" evidence="2">
    <location>
        <begin position="298"/>
        <end position="304"/>
    </location>
</feature>
<feature type="transmembrane region" description="Helical; Name=9" evidence="2">
    <location>
        <begin position="305"/>
        <end position="325"/>
    </location>
</feature>
<feature type="topological domain" description="Periplasmic" evidence="2">
    <location>
        <begin position="326"/>
        <end position="335"/>
    </location>
</feature>
<feature type="transmembrane region" description="Helical; Name=10" evidence="2">
    <location>
        <begin position="336"/>
        <end position="356"/>
    </location>
</feature>
<feature type="topological domain" description="Cytoplasmic" evidence="2">
    <location>
        <begin position="357"/>
        <end position="366"/>
    </location>
</feature>
<feature type="transmembrane region" description="Helical; Name=11" evidence="2">
    <location>
        <begin position="367"/>
        <end position="387"/>
    </location>
</feature>
<feature type="topological domain" description="Periplasmic" evidence="2">
    <location>
        <begin position="388"/>
        <end position="400"/>
    </location>
</feature>
<feature type="transmembrane region" description="Helical; Name=12" evidence="2">
    <location>
        <begin position="401"/>
        <end position="421"/>
    </location>
</feature>
<feature type="topological domain" description="Cytoplasmic" evidence="2">
    <location>
        <begin position="422"/>
        <end position="434"/>
    </location>
</feature>
<gene>
    <name type="primary">citA</name>
    <name type="ordered locus">STY0727</name>
    <name type="ordered locus">t2186</name>
</gene>
<name>CITA_SALTI</name>
<dbReference type="EMBL" id="AL513382">
    <property type="protein sequence ID" value="CAD05152.1"/>
    <property type="molecule type" value="Genomic_DNA"/>
</dbReference>
<dbReference type="EMBL" id="AE014613">
    <property type="protein sequence ID" value="AAO69796.1"/>
    <property type="molecule type" value="Genomic_DNA"/>
</dbReference>
<dbReference type="RefSeq" id="NP_455250.1">
    <property type="nucleotide sequence ID" value="NC_003198.1"/>
</dbReference>
<dbReference type="SMR" id="P0A2G4"/>
<dbReference type="STRING" id="220341.gene:17584739"/>
<dbReference type="KEGG" id="stt:t2186"/>
<dbReference type="KEGG" id="sty:STY0727"/>
<dbReference type="PATRIC" id="fig|220341.7.peg.732"/>
<dbReference type="eggNOG" id="COG0477">
    <property type="taxonomic scope" value="Bacteria"/>
</dbReference>
<dbReference type="HOGENOM" id="CLU_001265_39_0_6"/>
<dbReference type="OMA" id="FMYGIYN"/>
<dbReference type="OrthoDB" id="3690818at2"/>
<dbReference type="Proteomes" id="UP000000541">
    <property type="component" value="Chromosome"/>
</dbReference>
<dbReference type="Proteomes" id="UP000002670">
    <property type="component" value="Chromosome"/>
</dbReference>
<dbReference type="GO" id="GO:0005886">
    <property type="term" value="C:plasma membrane"/>
    <property type="evidence" value="ECO:0007669"/>
    <property type="project" value="UniProtKB-SubCell"/>
</dbReference>
<dbReference type="GO" id="GO:0015293">
    <property type="term" value="F:symporter activity"/>
    <property type="evidence" value="ECO:0007669"/>
    <property type="project" value="UniProtKB-KW"/>
</dbReference>
<dbReference type="GO" id="GO:0006101">
    <property type="term" value="P:citrate metabolic process"/>
    <property type="evidence" value="ECO:0007669"/>
    <property type="project" value="UniProtKB-KW"/>
</dbReference>
<dbReference type="CDD" id="cd17368">
    <property type="entry name" value="MFS_CitA"/>
    <property type="match status" value="1"/>
</dbReference>
<dbReference type="FunFam" id="1.20.1250.20:FF:000001">
    <property type="entry name" value="Dicarboxylate MFS transporter"/>
    <property type="match status" value="1"/>
</dbReference>
<dbReference type="FunFam" id="1.20.1250.20:FF:000123">
    <property type="entry name" value="Tricarballylate/proton symporter TcuC"/>
    <property type="match status" value="1"/>
</dbReference>
<dbReference type="Gene3D" id="1.20.1250.20">
    <property type="entry name" value="MFS general substrate transporter like domains"/>
    <property type="match status" value="2"/>
</dbReference>
<dbReference type="InterPro" id="IPR051084">
    <property type="entry name" value="H+-coupled_symporters"/>
</dbReference>
<dbReference type="InterPro" id="IPR011701">
    <property type="entry name" value="MFS"/>
</dbReference>
<dbReference type="InterPro" id="IPR020846">
    <property type="entry name" value="MFS_dom"/>
</dbReference>
<dbReference type="InterPro" id="IPR036259">
    <property type="entry name" value="MFS_trans_sf"/>
</dbReference>
<dbReference type="InterPro" id="IPR004736">
    <property type="entry name" value="MHS_symport"/>
</dbReference>
<dbReference type="InterPro" id="IPR005829">
    <property type="entry name" value="Sugar_transporter_CS"/>
</dbReference>
<dbReference type="NCBIfam" id="TIGR00883">
    <property type="entry name" value="2A0106"/>
    <property type="match status" value="1"/>
</dbReference>
<dbReference type="NCBIfam" id="NF011656">
    <property type="entry name" value="PRK15075.1"/>
    <property type="match status" value="1"/>
</dbReference>
<dbReference type="PANTHER" id="PTHR43528">
    <property type="entry name" value="ALPHA-KETOGLUTARATE PERMEASE"/>
    <property type="match status" value="1"/>
</dbReference>
<dbReference type="PANTHER" id="PTHR43528:SF6">
    <property type="entry name" value="CITRATE-PROTON SYMPORTER"/>
    <property type="match status" value="1"/>
</dbReference>
<dbReference type="Pfam" id="PF07690">
    <property type="entry name" value="MFS_1"/>
    <property type="match status" value="1"/>
</dbReference>
<dbReference type="SUPFAM" id="SSF103473">
    <property type="entry name" value="MFS general substrate transporter"/>
    <property type="match status" value="1"/>
</dbReference>
<dbReference type="PROSITE" id="PS50850">
    <property type="entry name" value="MFS"/>
    <property type="match status" value="1"/>
</dbReference>
<dbReference type="PROSITE" id="PS00216">
    <property type="entry name" value="SUGAR_TRANSPORT_1"/>
    <property type="match status" value="2"/>
</dbReference>
<dbReference type="PROSITE" id="PS00217">
    <property type="entry name" value="SUGAR_TRANSPORT_2"/>
    <property type="match status" value="1"/>
</dbReference>
<evidence type="ECO:0000250" key="1">
    <source>
        <dbReference type="UniProtKB" id="P0A2G3"/>
    </source>
</evidence>
<evidence type="ECO:0000255" key="2"/>
<evidence type="ECO:0000305" key="3"/>
<sequence>MAQHTPATSRAGTFGAILRVTSGNFLEQFDFFLFGFYATYIARTFFPAESEFASLMLTFAVFGSGFLMRPVGAIVLGAYIDRIGRRKGLMVTLAIMGCGTLLIALVPGYQTIGLAAPALVLLGRLLQGFSAGVELGGVSVYLSEIATPGNKGFYTSWQSASQQVAIVVAALIGYSLNITLGHDAISEWGWRIPFFIGCMIIPLIFVLRRSLQETEAFLQRKHRPDTREIFATIAKNWRIITAGTLLVAMTTTTFYFITVYTPTYGRTVLNLSARDSLIVTMLVGVSNFIWLPIGGAISDRIGRRAVLMGITLLALITTWPVMQWLTAAPDFTRMTLVLLWFSFFFGMYNGAMVAALTEVMPVYVRTVGFSLAFSLATAIFGGLTPAISTALVKLTGDKSSPGWWLMCAALCGLAATAMLFVRLSRGYIAAENKA</sequence>
<organism>
    <name type="scientific">Salmonella typhi</name>
    <dbReference type="NCBI Taxonomy" id="90370"/>
    <lineage>
        <taxon>Bacteria</taxon>
        <taxon>Pseudomonadati</taxon>
        <taxon>Pseudomonadota</taxon>
        <taxon>Gammaproteobacteria</taxon>
        <taxon>Enterobacterales</taxon>
        <taxon>Enterobacteriaceae</taxon>
        <taxon>Salmonella</taxon>
    </lineage>
</organism>